<name>RUVC_ACIBC</name>
<sequence length="181" mass="19446">MPLIIGIDPGSRLTGYGIIEKDGSKLRFVDAGTIRTETQEMPERLKRIFAGVERIVKFHGPTEAAVEQVFMAQNPDSALKLGQARGAAIAALVNLDLQVAEYTARQIKQSVVGYGAADKEQVQMMVMRLLNLTIKPQADAADALAAAICHAHASGSMSKLTVLNALGGMARGRSRSSSRRR</sequence>
<keyword id="KW-0963">Cytoplasm</keyword>
<keyword id="KW-0227">DNA damage</keyword>
<keyword id="KW-0233">DNA recombination</keyword>
<keyword id="KW-0234">DNA repair</keyword>
<keyword id="KW-0238">DNA-binding</keyword>
<keyword id="KW-0255">Endonuclease</keyword>
<keyword id="KW-0378">Hydrolase</keyword>
<keyword id="KW-0460">Magnesium</keyword>
<keyword id="KW-0479">Metal-binding</keyword>
<keyword id="KW-0540">Nuclease</keyword>
<accession>B2HYY2</accession>
<organism>
    <name type="scientific">Acinetobacter baumannii (strain ACICU)</name>
    <dbReference type="NCBI Taxonomy" id="405416"/>
    <lineage>
        <taxon>Bacteria</taxon>
        <taxon>Pseudomonadati</taxon>
        <taxon>Pseudomonadota</taxon>
        <taxon>Gammaproteobacteria</taxon>
        <taxon>Moraxellales</taxon>
        <taxon>Moraxellaceae</taxon>
        <taxon>Acinetobacter</taxon>
        <taxon>Acinetobacter calcoaceticus/baumannii complex</taxon>
    </lineage>
</organism>
<comment type="function">
    <text evidence="1">The RuvA-RuvB-RuvC complex processes Holliday junction (HJ) DNA during genetic recombination and DNA repair. Endonuclease that resolves HJ intermediates. Cleaves cruciform DNA by making single-stranded nicks across the HJ at symmetrical positions within the homologous arms, yielding a 5'-phosphate and a 3'-hydroxyl group; requires a central core of homology in the junction. The consensus cleavage sequence is 5'-(A/T)TT(C/G)-3'. Cleavage occurs on the 3'-side of the TT dinucleotide at the point of strand exchange. HJ branch migration catalyzed by RuvA-RuvB allows RuvC to scan DNA until it finds its consensus sequence, where it cleaves and resolves the cruciform DNA.</text>
</comment>
<comment type="catalytic activity">
    <reaction evidence="1">
        <text>Endonucleolytic cleavage at a junction such as a reciprocal single-stranded crossover between two homologous DNA duplexes (Holliday junction).</text>
        <dbReference type="EC" id="3.1.21.10"/>
    </reaction>
</comment>
<comment type="cofactor">
    <cofactor evidence="1">
        <name>Mg(2+)</name>
        <dbReference type="ChEBI" id="CHEBI:18420"/>
    </cofactor>
    <text evidence="1">Binds 2 Mg(2+) ion per subunit.</text>
</comment>
<comment type="subunit">
    <text evidence="1">Homodimer which binds Holliday junction (HJ) DNA. The HJ becomes 2-fold symmetrical on binding to RuvC with unstacked arms; it has a different conformation from HJ DNA in complex with RuvA. In the full resolvosome a probable DNA-RuvA(4)-RuvB(12)-RuvC(2) complex forms which resolves the HJ.</text>
</comment>
<comment type="subcellular location">
    <subcellularLocation>
        <location evidence="1">Cytoplasm</location>
    </subcellularLocation>
</comment>
<comment type="similarity">
    <text evidence="1">Belongs to the RuvC family.</text>
</comment>
<dbReference type="EC" id="3.1.21.10" evidence="1"/>
<dbReference type="EMBL" id="CP000863">
    <property type="protein sequence ID" value="ACC56869.1"/>
    <property type="molecule type" value="Genomic_DNA"/>
</dbReference>
<dbReference type="RefSeq" id="WP_001128330.1">
    <property type="nucleotide sequence ID" value="NZ_CP031380.1"/>
</dbReference>
<dbReference type="SMR" id="B2HYY2"/>
<dbReference type="GeneID" id="92893740"/>
<dbReference type="KEGG" id="abc:ACICU_01557"/>
<dbReference type="HOGENOM" id="CLU_091257_2_1_6"/>
<dbReference type="Proteomes" id="UP000008839">
    <property type="component" value="Chromosome"/>
</dbReference>
<dbReference type="GO" id="GO:0005737">
    <property type="term" value="C:cytoplasm"/>
    <property type="evidence" value="ECO:0007669"/>
    <property type="project" value="UniProtKB-SubCell"/>
</dbReference>
<dbReference type="GO" id="GO:0048476">
    <property type="term" value="C:Holliday junction resolvase complex"/>
    <property type="evidence" value="ECO:0007669"/>
    <property type="project" value="UniProtKB-UniRule"/>
</dbReference>
<dbReference type="GO" id="GO:0008821">
    <property type="term" value="F:crossover junction DNA endonuclease activity"/>
    <property type="evidence" value="ECO:0007669"/>
    <property type="project" value="UniProtKB-UniRule"/>
</dbReference>
<dbReference type="GO" id="GO:0003677">
    <property type="term" value="F:DNA binding"/>
    <property type="evidence" value="ECO:0007669"/>
    <property type="project" value="UniProtKB-KW"/>
</dbReference>
<dbReference type="GO" id="GO:0000287">
    <property type="term" value="F:magnesium ion binding"/>
    <property type="evidence" value="ECO:0007669"/>
    <property type="project" value="UniProtKB-UniRule"/>
</dbReference>
<dbReference type="GO" id="GO:0006310">
    <property type="term" value="P:DNA recombination"/>
    <property type="evidence" value="ECO:0007669"/>
    <property type="project" value="UniProtKB-UniRule"/>
</dbReference>
<dbReference type="GO" id="GO:0006281">
    <property type="term" value="P:DNA repair"/>
    <property type="evidence" value="ECO:0007669"/>
    <property type="project" value="UniProtKB-UniRule"/>
</dbReference>
<dbReference type="CDD" id="cd16962">
    <property type="entry name" value="RuvC"/>
    <property type="match status" value="1"/>
</dbReference>
<dbReference type="FunFam" id="3.30.420.10:FF:000002">
    <property type="entry name" value="Crossover junction endodeoxyribonuclease RuvC"/>
    <property type="match status" value="1"/>
</dbReference>
<dbReference type="Gene3D" id="3.30.420.10">
    <property type="entry name" value="Ribonuclease H-like superfamily/Ribonuclease H"/>
    <property type="match status" value="1"/>
</dbReference>
<dbReference type="HAMAP" id="MF_00034">
    <property type="entry name" value="RuvC"/>
    <property type="match status" value="1"/>
</dbReference>
<dbReference type="InterPro" id="IPR012337">
    <property type="entry name" value="RNaseH-like_sf"/>
</dbReference>
<dbReference type="InterPro" id="IPR036397">
    <property type="entry name" value="RNaseH_sf"/>
</dbReference>
<dbReference type="InterPro" id="IPR020563">
    <property type="entry name" value="X-over_junc_endoDNase_Mg_BS"/>
</dbReference>
<dbReference type="InterPro" id="IPR002176">
    <property type="entry name" value="X-over_junc_endoDNase_RuvC"/>
</dbReference>
<dbReference type="NCBIfam" id="TIGR00228">
    <property type="entry name" value="ruvC"/>
    <property type="match status" value="1"/>
</dbReference>
<dbReference type="PANTHER" id="PTHR30194">
    <property type="entry name" value="CROSSOVER JUNCTION ENDODEOXYRIBONUCLEASE RUVC"/>
    <property type="match status" value="1"/>
</dbReference>
<dbReference type="PANTHER" id="PTHR30194:SF3">
    <property type="entry name" value="CROSSOVER JUNCTION ENDODEOXYRIBONUCLEASE RUVC"/>
    <property type="match status" value="1"/>
</dbReference>
<dbReference type="Pfam" id="PF02075">
    <property type="entry name" value="RuvC"/>
    <property type="match status" value="1"/>
</dbReference>
<dbReference type="PRINTS" id="PR00696">
    <property type="entry name" value="RSOLVASERUVC"/>
</dbReference>
<dbReference type="SUPFAM" id="SSF53098">
    <property type="entry name" value="Ribonuclease H-like"/>
    <property type="match status" value="1"/>
</dbReference>
<dbReference type="PROSITE" id="PS01321">
    <property type="entry name" value="RUVC"/>
    <property type="match status" value="1"/>
</dbReference>
<gene>
    <name evidence="1" type="primary">ruvC</name>
    <name type="ordered locus">ACICU_01557</name>
</gene>
<reference key="1">
    <citation type="journal article" date="2008" name="Antimicrob. Agents Chemother.">
        <title>Whole-genome pyrosequencing of an epidemic multidrug-resistant Acinetobacter baumannii strain belonging to the European clone II group.</title>
        <authorList>
            <person name="Iacono M."/>
            <person name="Villa L."/>
            <person name="Fortini D."/>
            <person name="Bordoni R."/>
            <person name="Imperi F."/>
            <person name="Bonnal R.J."/>
            <person name="Sicheritz-Ponten T."/>
            <person name="De Bellis G."/>
            <person name="Visca P."/>
            <person name="Cassone A."/>
            <person name="Carattoli A."/>
        </authorList>
    </citation>
    <scope>NUCLEOTIDE SEQUENCE [LARGE SCALE GENOMIC DNA]</scope>
    <source>
        <strain>ACICU</strain>
    </source>
</reference>
<protein>
    <recommendedName>
        <fullName evidence="1">Crossover junction endodeoxyribonuclease RuvC</fullName>
        <ecNumber evidence="1">3.1.21.10</ecNumber>
    </recommendedName>
    <alternativeName>
        <fullName evidence="1">Holliday junction nuclease RuvC</fullName>
    </alternativeName>
    <alternativeName>
        <fullName evidence="1">Holliday junction resolvase RuvC</fullName>
    </alternativeName>
</protein>
<proteinExistence type="inferred from homology"/>
<feature type="chain" id="PRO_1000090494" description="Crossover junction endodeoxyribonuclease RuvC">
    <location>
        <begin position="1"/>
        <end position="181"/>
    </location>
</feature>
<feature type="active site" evidence="1">
    <location>
        <position position="8"/>
    </location>
</feature>
<feature type="active site" evidence="1">
    <location>
        <position position="67"/>
    </location>
</feature>
<feature type="active site" evidence="1">
    <location>
        <position position="139"/>
    </location>
</feature>
<feature type="binding site" evidence="1">
    <location>
        <position position="8"/>
    </location>
    <ligand>
        <name>Mg(2+)</name>
        <dbReference type="ChEBI" id="CHEBI:18420"/>
        <label>1</label>
    </ligand>
</feature>
<feature type="binding site" evidence="1">
    <location>
        <position position="67"/>
    </location>
    <ligand>
        <name>Mg(2+)</name>
        <dbReference type="ChEBI" id="CHEBI:18420"/>
        <label>2</label>
    </ligand>
</feature>
<feature type="binding site" evidence="1">
    <location>
        <position position="139"/>
    </location>
    <ligand>
        <name>Mg(2+)</name>
        <dbReference type="ChEBI" id="CHEBI:18420"/>
        <label>1</label>
    </ligand>
</feature>
<evidence type="ECO:0000255" key="1">
    <source>
        <dbReference type="HAMAP-Rule" id="MF_00034"/>
    </source>
</evidence>